<proteinExistence type="inferred from homology"/>
<sequence length="229" mass="25767">MEVSKIRIHDLPEEERPRERLIKNGPESLSNAELLGIVLRTGSREENVISLCSRILMEYNIKQLSLANVSKLMQVNGIGKAKAAQIAAVFELARRLETFVEEPKRKISSPKDVYTLMYPKMREQKKEKFITLYLDTKNQILKEEVVSIGSLNASIVHPREVFKSALMESSASVIMVHNHPSGDPSPSREDIMVTEKLVEGGKLLGIDILDHIIIGDGRYVSLKDEGFVK</sequence>
<comment type="similarity">
    <text evidence="2">Belongs to the UPF0758 family.</text>
</comment>
<reference key="1">
    <citation type="journal article" date="2002" name="J. Mol. Microbiol. Biotechnol.">
        <title>The genome of Methanosarcina mazei: evidence for lateral gene transfer between Bacteria and Archaea.</title>
        <authorList>
            <person name="Deppenmeier U."/>
            <person name="Johann A."/>
            <person name="Hartsch T."/>
            <person name="Merkl R."/>
            <person name="Schmitz R.A."/>
            <person name="Martinez-Arias R."/>
            <person name="Henne A."/>
            <person name="Wiezer A."/>
            <person name="Baeumer S."/>
            <person name="Jacobi C."/>
            <person name="Brueggemann H."/>
            <person name="Lienard T."/>
            <person name="Christmann A."/>
            <person name="Boemecke M."/>
            <person name="Steckel S."/>
            <person name="Bhattacharyya A."/>
            <person name="Lykidis A."/>
            <person name="Overbeek R."/>
            <person name="Klenk H.-P."/>
            <person name="Gunsalus R.P."/>
            <person name="Fritz H.-J."/>
            <person name="Gottschalk G."/>
        </authorList>
    </citation>
    <scope>NUCLEOTIDE SEQUENCE [LARGE SCALE GENOMIC DNA]</scope>
    <source>
        <strain>ATCC BAA-159 / DSM 3647 / Goe1 / Go1 / JCM 11833 / OCM 88</strain>
    </source>
</reference>
<gene>
    <name type="ordered locus">MM_2791</name>
</gene>
<evidence type="ECO:0000255" key="1">
    <source>
        <dbReference type="PROSITE-ProRule" id="PRU01182"/>
    </source>
</evidence>
<evidence type="ECO:0000305" key="2"/>
<feature type="chain" id="PRO_0000190761" description="UPF0758 protein MM_2791">
    <location>
        <begin position="1"/>
        <end position="229"/>
    </location>
</feature>
<feature type="domain" description="MPN" evidence="1">
    <location>
        <begin position="106"/>
        <end position="228"/>
    </location>
</feature>
<feature type="short sequence motif" description="JAMM motif" evidence="1">
    <location>
        <begin position="177"/>
        <end position="190"/>
    </location>
</feature>
<feature type="binding site" evidence="1">
    <location>
        <position position="177"/>
    </location>
    <ligand>
        <name>Zn(2+)</name>
        <dbReference type="ChEBI" id="CHEBI:29105"/>
        <note>catalytic</note>
    </ligand>
</feature>
<feature type="binding site" evidence="1">
    <location>
        <position position="179"/>
    </location>
    <ligand>
        <name>Zn(2+)</name>
        <dbReference type="ChEBI" id="CHEBI:29105"/>
        <note>catalytic</note>
    </ligand>
</feature>
<feature type="binding site" evidence="1">
    <location>
        <position position="190"/>
    </location>
    <ligand>
        <name>Zn(2+)</name>
        <dbReference type="ChEBI" id="CHEBI:29105"/>
        <note>catalytic</note>
    </ligand>
</feature>
<keyword id="KW-0378">Hydrolase</keyword>
<keyword id="KW-0479">Metal-binding</keyword>
<keyword id="KW-0482">Metalloprotease</keyword>
<keyword id="KW-0645">Protease</keyword>
<keyword id="KW-0862">Zinc</keyword>
<name>Y2791_METMA</name>
<accession>Q8PTC5</accession>
<dbReference type="EMBL" id="AE008384">
    <property type="protein sequence ID" value="AAM32487.1"/>
    <property type="molecule type" value="Genomic_DNA"/>
</dbReference>
<dbReference type="SMR" id="Q8PTC5"/>
<dbReference type="KEGG" id="mma:MM_2791"/>
<dbReference type="PATRIC" id="fig|192952.21.peg.3221"/>
<dbReference type="eggNOG" id="arCOG04919">
    <property type="taxonomic scope" value="Archaea"/>
</dbReference>
<dbReference type="HOGENOM" id="CLU_073529_0_2_2"/>
<dbReference type="Proteomes" id="UP000000595">
    <property type="component" value="Chromosome"/>
</dbReference>
<dbReference type="GO" id="GO:0046872">
    <property type="term" value="F:metal ion binding"/>
    <property type="evidence" value="ECO:0007669"/>
    <property type="project" value="UniProtKB-KW"/>
</dbReference>
<dbReference type="GO" id="GO:0008237">
    <property type="term" value="F:metallopeptidase activity"/>
    <property type="evidence" value="ECO:0007669"/>
    <property type="project" value="UniProtKB-KW"/>
</dbReference>
<dbReference type="GO" id="GO:0006508">
    <property type="term" value="P:proteolysis"/>
    <property type="evidence" value="ECO:0007669"/>
    <property type="project" value="UniProtKB-KW"/>
</dbReference>
<dbReference type="CDD" id="cd08071">
    <property type="entry name" value="MPN_DUF2466"/>
    <property type="match status" value="1"/>
</dbReference>
<dbReference type="Gene3D" id="3.40.140.10">
    <property type="entry name" value="Cytidine Deaminase, domain 2"/>
    <property type="match status" value="1"/>
</dbReference>
<dbReference type="InterPro" id="IPR037518">
    <property type="entry name" value="MPN"/>
</dbReference>
<dbReference type="InterPro" id="IPR025657">
    <property type="entry name" value="RadC_JAB"/>
</dbReference>
<dbReference type="InterPro" id="IPR010994">
    <property type="entry name" value="RuvA_2-like"/>
</dbReference>
<dbReference type="InterPro" id="IPR001405">
    <property type="entry name" value="UPF0758"/>
</dbReference>
<dbReference type="InterPro" id="IPR020891">
    <property type="entry name" value="UPF0758_CS"/>
</dbReference>
<dbReference type="InterPro" id="IPR046778">
    <property type="entry name" value="UPF0758_N"/>
</dbReference>
<dbReference type="NCBIfam" id="NF000642">
    <property type="entry name" value="PRK00024.1"/>
    <property type="match status" value="1"/>
</dbReference>
<dbReference type="NCBIfam" id="TIGR00608">
    <property type="entry name" value="radc"/>
    <property type="match status" value="1"/>
</dbReference>
<dbReference type="PANTHER" id="PTHR30471">
    <property type="entry name" value="DNA REPAIR PROTEIN RADC"/>
    <property type="match status" value="1"/>
</dbReference>
<dbReference type="PANTHER" id="PTHR30471:SF3">
    <property type="entry name" value="UPF0758 PROTEIN YEES-RELATED"/>
    <property type="match status" value="1"/>
</dbReference>
<dbReference type="Pfam" id="PF04002">
    <property type="entry name" value="RadC"/>
    <property type="match status" value="1"/>
</dbReference>
<dbReference type="Pfam" id="PF20582">
    <property type="entry name" value="UPF0758_N"/>
    <property type="match status" value="1"/>
</dbReference>
<dbReference type="SUPFAM" id="SSF47781">
    <property type="entry name" value="RuvA domain 2-like"/>
    <property type="match status" value="1"/>
</dbReference>
<dbReference type="PROSITE" id="PS50249">
    <property type="entry name" value="MPN"/>
    <property type="match status" value="1"/>
</dbReference>
<dbReference type="PROSITE" id="PS01302">
    <property type="entry name" value="UPF0758"/>
    <property type="match status" value="1"/>
</dbReference>
<protein>
    <recommendedName>
        <fullName>UPF0758 protein MM_2791</fullName>
    </recommendedName>
</protein>
<organism>
    <name type="scientific">Methanosarcina mazei (strain ATCC BAA-159 / DSM 3647 / Goe1 / Go1 / JCM 11833 / OCM 88)</name>
    <name type="common">Methanosarcina frisia</name>
    <dbReference type="NCBI Taxonomy" id="192952"/>
    <lineage>
        <taxon>Archaea</taxon>
        <taxon>Methanobacteriati</taxon>
        <taxon>Methanobacteriota</taxon>
        <taxon>Stenosarchaea group</taxon>
        <taxon>Methanomicrobia</taxon>
        <taxon>Methanosarcinales</taxon>
        <taxon>Methanosarcinaceae</taxon>
        <taxon>Methanosarcina</taxon>
    </lineage>
</organism>